<proteinExistence type="inferred from homology"/>
<sequence length="205" mass="23328">MQRGKFITIDGVEGSGKSTQIDFICDYLVTKKINVILTREPGGTELGEKIRTLLLSTDIQSIHGDTELLLLFAARNEHIRTKIIPSLEKGDWVLSDRFTDASYAYQGGGRGLSIERITQLEKWVLQDFTPDVTLLLDVSVALGMSRVESRGRKDRIELETNDFFKRVRNSYIERSKQFPKRIKLIDASKTLEQTAQQIKIILQVL</sequence>
<gene>
    <name evidence="1" type="primary">tmk</name>
    <name type="ordered locus">Rmag_0220</name>
</gene>
<reference key="1">
    <citation type="journal article" date="2007" name="Science">
        <title>The Calyptogena magnifica chemoautotrophic symbiont genome.</title>
        <authorList>
            <person name="Newton I.L.G."/>
            <person name="Woyke T."/>
            <person name="Auchtung T.A."/>
            <person name="Dilly G.F."/>
            <person name="Dutton R.J."/>
            <person name="Fisher M.C."/>
            <person name="Fontanez K.M."/>
            <person name="Lau E."/>
            <person name="Stewart F.J."/>
            <person name="Richardson P.M."/>
            <person name="Barry K.W."/>
            <person name="Saunders E."/>
            <person name="Detter J.C."/>
            <person name="Wu D."/>
            <person name="Eisen J.A."/>
            <person name="Cavanaugh C.M."/>
        </authorList>
    </citation>
    <scope>NUCLEOTIDE SEQUENCE [LARGE SCALE GENOMIC DNA]</scope>
</reference>
<dbReference type="EC" id="2.7.4.9" evidence="1"/>
<dbReference type="EMBL" id="CP000488">
    <property type="protein sequence ID" value="ABL02006.1"/>
    <property type="molecule type" value="Genomic_DNA"/>
</dbReference>
<dbReference type="RefSeq" id="WP_011737631.1">
    <property type="nucleotide sequence ID" value="NC_008610.1"/>
</dbReference>
<dbReference type="SMR" id="A1AVP9"/>
<dbReference type="STRING" id="413404.Rmag_0220"/>
<dbReference type="KEGG" id="rma:Rmag_0220"/>
<dbReference type="eggNOG" id="COG0125">
    <property type="taxonomic scope" value="Bacteria"/>
</dbReference>
<dbReference type="HOGENOM" id="CLU_049131_0_2_6"/>
<dbReference type="OrthoDB" id="9774907at2"/>
<dbReference type="Proteomes" id="UP000002587">
    <property type="component" value="Chromosome"/>
</dbReference>
<dbReference type="GO" id="GO:0005829">
    <property type="term" value="C:cytosol"/>
    <property type="evidence" value="ECO:0007669"/>
    <property type="project" value="TreeGrafter"/>
</dbReference>
<dbReference type="GO" id="GO:0005524">
    <property type="term" value="F:ATP binding"/>
    <property type="evidence" value="ECO:0007669"/>
    <property type="project" value="UniProtKB-UniRule"/>
</dbReference>
<dbReference type="GO" id="GO:0004798">
    <property type="term" value="F:dTMP kinase activity"/>
    <property type="evidence" value="ECO:0007669"/>
    <property type="project" value="UniProtKB-UniRule"/>
</dbReference>
<dbReference type="GO" id="GO:0006233">
    <property type="term" value="P:dTDP biosynthetic process"/>
    <property type="evidence" value="ECO:0007669"/>
    <property type="project" value="InterPro"/>
</dbReference>
<dbReference type="GO" id="GO:0006235">
    <property type="term" value="P:dTTP biosynthetic process"/>
    <property type="evidence" value="ECO:0007669"/>
    <property type="project" value="UniProtKB-UniRule"/>
</dbReference>
<dbReference type="GO" id="GO:0006227">
    <property type="term" value="P:dUDP biosynthetic process"/>
    <property type="evidence" value="ECO:0007669"/>
    <property type="project" value="TreeGrafter"/>
</dbReference>
<dbReference type="CDD" id="cd01672">
    <property type="entry name" value="TMPK"/>
    <property type="match status" value="1"/>
</dbReference>
<dbReference type="FunFam" id="3.40.50.300:FF:000225">
    <property type="entry name" value="Thymidylate kinase"/>
    <property type="match status" value="1"/>
</dbReference>
<dbReference type="Gene3D" id="3.40.50.300">
    <property type="entry name" value="P-loop containing nucleotide triphosphate hydrolases"/>
    <property type="match status" value="1"/>
</dbReference>
<dbReference type="HAMAP" id="MF_00165">
    <property type="entry name" value="Thymidylate_kinase"/>
    <property type="match status" value="1"/>
</dbReference>
<dbReference type="InterPro" id="IPR027417">
    <property type="entry name" value="P-loop_NTPase"/>
</dbReference>
<dbReference type="InterPro" id="IPR039430">
    <property type="entry name" value="Thymidylate_kin-like_dom"/>
</dbReference>
<dbReference type="InterPro" id="IPR018094">
    <property type="entry name" value="Thymidylate_kinase"/>
</dbReference>
<dbReference type="NCBIfam" id="TIGR00041">
    <property type="entry name" value="DTMP_kinase"/>
    <property type="match status" value="1"/>
</dbReference>
<dbReference type="PANTHER" id="PTHR10344">
    <property type="entry name" value="THYMIDYLATE KINASE"/>
    <property type="match status" value="1"/>
</dbReference>
<dbReference type="PANTHER" id="PTHR10344:SF4">
    <property type="entry name" value="UMP-CMP KINASE 2, MITOCHONDRIAL"/>
    <property type="match status" value="1"/>
</dbReference>
<dbReference type="Pfam" id="PF02223">
    <property type="entry name" value="Thymidylate_kin"/>
    <property type="match status" value="1"/>
</dbReference>
<dbReference type="SUPFAM" id="SSF52540">
    <property type="entry name" value="P-loop containing nucleoside triphosphate hydrolases"/>
    <property type="match status" value="1"/>
</dbReference>
<comment type="function">
    <text evidence="1">Phosphorylation of dTMP to form dTDP in both de novo and salvage pathways of dTTP synthesis.</text>
</comment>
<comment type="catalytic activity">
    <reaction evidence="1">
        <text>dTMP + ATP = dTDP + ADP</text>
        <dbReference type="Rhea" id="RHEA:13517"/>
        <dbReference type="ChEBI" id="CHEBI:30616"/>
        <dbReference type="ChEBI" id="CHEBI:58369"/>
        <dbReference type="ChEBI" id="CHEBI:63528"/>
        <dbReference type="ChEBI" id="CHEBI:456216"/>
        <dbReference type="EC" id="2.7.4.9"/>
    </reaction>
</comment>
<comment type="similarity">
    <text evidence="1">Belongs to the thymidylate kinase family.</text>
</comment>
<keyword id="KW-0067">ATP-binding</keyword>
<keyword id="KW-0418">Kinase</keyword>
<keyword id="KW-0545">Nucleotide biosynthesis</keyword>
<keyword id="KW-0547">Nucleotide-binding</keyword>
<keyword id="KW-0808">Transferase</keyword>
<feature type="chain" id="PRO_1000023273" description="Thymidylate kinase">
    <location>
        <begin position="1"/>
        <end position="205"/>
    </location>
</feature>
<feature type="binding site" evidence="1">
    <location>
        <begin position="11"/>
        <end position="18"/>
    </location>
    <ligand>
        <name>ATP</name>
        <dbReference type="ChEBI" id="CHEBI:30616"/>
    </ligand>
</feature>
<evidence type="ECO:0000255" key="1">
    <source>
        <dbReference type="HAMAP-Rule" id="MF_00165"/>
    </source>
</evidence>
<name>KTHY_RUTMC</name>
<protein>
    <recommendedName>
        <fullName evidence="1">Thymidylate kinase</fullName>
        <ecNumber evidence="1">2.7.4.9</ecNumber>
    </recommendedName>
    <alternativeName>
        <fullName evidence="1">dTMP kinase</fullName>
    </alternativeName>
</protein>
<accession>A1AVP9</accession>
<organism>
    <name type="scientific">Ruthia magnifica subsp. Calyptogena magnifica</name>
    <dbReference type="NCBI Taxonomy" id="413404"/>
    <lineage>
        <taxon>Bacteria</taxon>
        <taxon>Pseudomonadati</taxon>
        <taxon>Pseudomonadota</taxon>
        <taxon>Gammaproteobacteria</taxon>
        <taxon>Candidatus Pseudothioglobaceae</taxon>
        <taxon>Candidatus Ruthturnera</taxon>
    </lineage>
</organism>